<organism>
    <name type="scientific">Bacillus pumilus (strain SAFR-032)</name>
    <dbReference type="NCBI Taxonomy" id="315750"/>
    <lineage>
        <taxon>Bacteria</taxon>
        <taxon>Bacillati</taxon>
        <taxon>Bacillota</taxon>
        <taxon>Bacilli</taxon>
        <taxon>Bacillales</taxon>
        <taxon>Bacillaceae</taxon>
        <taxon>Bacillus</taxon>
    </lineage>
</organism>
<accession>A8FF72</accession>
<sequence>MRVNITLACTECGERNYITKKNKRNNPDRVEFKKYCSRDKKQTVHRETK</sequence>
<comment type="similarity">
    <text evidence="1">Belongs to the bacterial ribosomal protein bL33 family.</text>
</comment>
<evidence type="ECO:0000255" key="1">
    <source>
        <dbReference type="HAMAP-Rule" id="MF_00294"/>
    </source>
</evidence>
<gene>
    <name evidence="1" type="primary">rpmG2</name>
    <name type="synonym">rpmGA</name>
    <name type="ordered locus">BPUM_2220</name>
</gene>
<dbReference type="EMBL" id="CP000813">
    <property type="protein sequence ID" value="ABV62889.1"/>
    <property type="molecule type" value="Genomic_DNA"/>
</dbReference>
<dbReference type="SMR" id="A8FF72"/>
<dbReference type="STRING" id="315750.BPUM_2220"/>
<dbReference type="GeneID" id="5621485"/>
<dbReference type="KEGG" id="bpu:BPUM_2220"/>
<dbReference type="eggNOG" id="COG0267">
    <property type="taxonomic scope" value="Bacteria"/>
</dbReference>
<dbReference type="HOGENOM" id="CLU_190949_0_2_9"/>
<dbReference type="OrthoDB" id="197660at2"/>
<dbReference type="Proteomes" id="UP000001355">
    <property type="component" value="Chromosome"/>
</dbReference>
<dbReference type="GO" id="GO:0005737">
    <property type="term" value="C:cytoplasm"/>
    <property type="evidence" value="ECO:0007669"/>
    <property type="project" value="UniProtKB-ARBA"/>
</dbReference>
<dbReference type="GO" id="GO:1990904">
    <property type="term" value="C:ribonucleoprotein complex"/>
    <property type="evidence" value="ECO:0007669"/>
    <property type="project" value="UniProtKB-KW"/>
</dbReference>
<dbReference type="GO" id="GO:0005840">
    <property type="term" value="C:ribosome"/>
    <property type="evidence" value="ECO:0007669"/>
    <property type="project" value="UniProtKB-KW"/>
</dbReference>
<dbReference type="GO" id="GO:0003735">
    <property type="term" value="F:structural constituent of ribosome"/>
    <property type="evidence" value="ECO:0007669"/>
    <property type="project" value="InterPro"/>
</dbReference>
<dbReference type="GO" id="GO:0006412">
    <property type="term" value="P:translation"/>
    <property type="evidence" value="ECO:0007669"/>
    <property type="project" value="UniProtKB-UniRule"/>
</dbReference>
<dbReference type="Gene3D" id="2.20.28.120">
    <property type="entry name" value="Ribosomal protein L33"/>
    <property type="match status" value="1"/>
</dbReference>
<dbReference type="HAMAP" id="MF_00294">
    <property type="entry name" value="Ribosomal_bL33"/>
    <property type="match status" value="1"/>
</dbReference>
<dbReference type="InterPro" id="IPR001705">
    <property type="entry name" value="Ribosomal_bL33"/>
</dbReference>
<dbReference type="InterPro" id="IPR018264">
    <property type="entry name" value="Ribosomal_bL33_CS"/>
</dbReference>
<dbReference type="InterPro" id="IPR038584">
    <property type="entry name" value="Ribosomal_bL33_sf"/>
</dbReference>
<dbReference type="InterPro" id="IPR011332">
    <property type="entry name" value="Ribosomal_zn-bd"/>
</dbReference>
<dbReference type="NCBIfam" id="NF001764">
    <property type="entry name" value="PRK00504.1"/>
    <property type="match status" value="1"/>
</dbReference>
<dbReference type="NCBIfam" id="NF001860">
    <property type="entry name" value="PRK00595.1"/>
    <property type="match status" value="1"/>
</dbReference>
<dbReference type="NCBIfam" id="TIGR01023">
    <property type="entry name" value="rpmG_bact"/>
    <property type="match status" value="1"/>
</dbReference>
<dbReference type="PANTHER" id="PTHR43168">
    <property type="entry name" value="50S RIBOSOMAL PROTEIN L33, CHLOROPLASTIC"/>
    <property type="match status" value="1"/>
</dbReference>
<dbReference type="PANTHER" id="PTHR43168:SF2">
    <property type="entry name" value="LARGE RIBOSOMAL SUBUNIT PROTEIN BL33C"/>
    <property type="match status" value="1"/>
</dbReference>
<dbReference type="Pfam" id="PF00471">
    <property type="entry name" value="Ribosomal_L33"/>
    <property type="match status" value="1"/>
</dbReference>
<dbReference type="SUPFAM" id="SSF57829">
    <property type="entry name" value="Zn-binding ribosomal proteins"/>
    <property type="match status" value="1"/>
</dbReference>
<dbReference type="PROSITE" id="PS00582">
    <property type="entry name" value="RIBOSOMAL_L33"/>
    <property type="match status" value="1"/>
</dbReference>
<reference key="1">
    <citation type="journal article" date="2007" name="PLoS ONE">
        <title>Paradoxical DNA repair and peroxide resistance gene conservation in Bacillus pumilus SAFR-032.</title>
        <authorList>
            <person name="Gioia J."/>
            <person name="Yerrapragada S."/>
            <person name="Qin X."/>
            <person name="Jiang H."/>
            <person name="Igboeli O.C."/>
            <person name="Muzny D."/>
            <person name="Dugan-Rocha S."/>
            <person name="Ding Y."/>
            <person name="Hawes A."/>
            <person name="Liu W."/>
            <person name="Perez L."/>
            <person name="Kovar C."/>
            <person name="Dinh H."/>
            <person name="Lee S."/>
            <person name="Nazareth L."/>
            <person name="Blyth P."/>
            <person name="Holder M."/>
            <person name="Buhay C."/>
            <person name="Tirumalai M.R."/>
            <person name="Liu Y."/>
            <person name="Dasgupta I."/>
            <person name="Bokhetache L."/>
            <person name="Fujita M."/>
            <person name="Karouia F."/>
            <person name="Eswara Moorthy P."/>
            <person name="Siefert J."/>
            <person name="Uzman A."/>
            <person name="Buzumbo P."/>
            <person name="Verma A."/>
            <person name="Zwiya H."/>
            <person name="McWilliams B.D."/>
            <person name="Olowu A."/>
            <person name="Clinkenbeard K.D."/>
            <person name="Newcombe D."/>
            <person name="Golebiewski L."/>
            <person name="Petrosino J.F."/>
            <person name="Nicholson W.L."/>
            <person name="Fox G.E."/>
            <person name="Venkateswaran K."/>
            <person name="Highlander S.K."/>
            <person name="Weinstock G.M."/>
        </authorList>
    </citation>
    <scope>NUCLEOTIDE SEQUENCE [LARGE SCALE GENOMIC DNA]</scope>
    <source>
        <strain>SAFR-032</strain>
    </source>
</reference>
<keyword id="KW-0687">Ribonucleoprotein</keyword>
<keyword id="KW-0689">Ribosomal protein</keyword>
<proteinExistence type="inferred from homology"/>
<feature type="chain" id="PRO_0000356396" description="Large ribosomal subunit protein bL33B">
    <location>
        <begin position="1"/>
        <end position="49"/>
    </location>
</feature>
<name>RL332_BACP2</name>
<protein>
    <recommendedName>
        <fullName evidence="1">Large ribosomal subunit protein bL33B</fullName>
    </recommendedName>
    <alternativeName>
        <fullName evidence="1">50S ribosomal protein L33 2</fullName>
    </alternativeName>
</protein>